<evidence type="ECO:0000256" key="1">
    <source>
        <dbReference type="SAM" id="MobiDB-lite"/>
    </source>
</evidence>
<proteinExistence type="evidence at transcript level"/>
<gene>
    <name type="primary">BR1</name>
</gene>
<keyword id="KW-0677">Repeat</keyword>
<keyword id="KW-0964">Secreted</keyword>
<protein>
    <recommendedName>
        <fullName>Balbiani ring protein 1</fullName>
    </recommendedName>
    <alternativeName>
        <fullName>Giant secretory protein I-A</fullName>
        <shortName>GSP-IA</shortName>
    </alternativeName>
</protein>
<name>BAR1_CHIPA</name>
<dbReference type="EMBL" id="X05621">
    <property type="protein sequence ID" value="CAA29108.1"/>
    <property type="molecule type" value="Genomic_DNA"/>
</dbReference>
<dbReference type="PIR" id="A29662">
    <property type="entry name" value="A29662"/>
</dbReference>
<dbReference type="GO" id="GO:0005576">
    <property type="term" value="C:extracellular region"/>
    <property type="evidence" value="ECO:0007669"/>
    <property type="project" value="UniProtKB-SubCell"/>
</dbReference>
<organism>
    <name type="scientific">Chironomus pallidivittatus</name>
    <name type="common">Midge</name>
    <name type="synonym">Camptochironomus pallidivittatus</name>
    <dbReference type="NCBI Taxonomy" id="7151"/>
    <lineage>
        <taxon>Eukaryota</taxon>
        <taxon>Metazoa</taxon>
        <taxon>Ecdysozoa</taxon>
        <taxon>Arthropoda</taxon>
        <taxon>Hexapoda</taxon>
        <taxon>Insecta</taxon>
        <taxon>Pterygota</taxon>
        <taxon>Neoptera</taxon>
        <taxon>Endopterygota</taxon>
        <taxon>Diptera</taxon>
        <taxon>Nematocera</taxon>
        <taxon>Chironomoidea</taxon>
        <taxon>Chironomidae</taxon>
        <taxon>Chironominae</taxon>
        <taxon>Chironomus</taxon>
    </lineage>
</organism>
<sequence>PSKSGPRPSKSGPRPSKSGPRPSKSGPRPSKSGPRPEKCGSAMRKAEAEKCAKRKGRFSASKCRCTSAGKPSKSEPRTERPTTCVESSESDEVTPTPEVPTTCVDSSESRESPVCDDAMRKSEGEKCANLGGKFNAENCKCTPEPVTEGPTTCVESSEGDDSLVCDDEMRRSEAEKCTKIGGKFDSETCKCTSEPVTEGPTTCLESSESDEVTTKKPCDCTCAPECKRRKMIIDVLLKYFYRDVYDKNCCKENCKCDGAKFPECEESNSKQSGMFDILAKLFKPQGGDFEAGSVEVDGKKLTSEKKEKFGKALQDAVKGLEDVLNS</sequence>
<feature type="chain" id="PRO_0000064822" description="Balbiani ring protein 1">
    <location>
        <begin position="1" status="less than"/>
        <end position="326"/>
    </location>
</feature>
<feature type="region of interest" description="Disordered" evidence="1">
    <location>
        <begin position="1"/>
        <end position="119"/>
    </location>
</feature>
<feature type="compositionally biased region" description="Low complexity" evidence="1">
    <location>
        <begin position="1"/>
        <end position="33"/>
    </location>
</feature>
<feature type="compositionally biased region" description="Basic and acidic residues" evidence="1">
    <location>
        <begin position="34"/>
        <end position="51"/>
    </location>
</feature>
<feature type="compositionally biased region" description="Low complexity" evidence="1">
    <location>
        <begin position="93"/>
        <end position="102"/>
    </location>
</feature>
<feature type="compositionally biased region" description="Basic and acidic residues" evidence="1">
    <location>
        <begin position="107"/>
        <end position="119"/>
    </location>
</feature>
<feature type="non-terminal residue">
    <location>
        <position position="1"/>
    </location>
</feature>
<comment type="function">
    <text>Used by the larvae to construct a supramolecular structure, the larval tube.</text>
</comment>
<comment type="subcellular location">
    <subcellularLocation>
        <location>Secreted</location>
    </subcellularLocation>
</comment>
<comment type="tissue specificity">
    <text>Salivary gland.</text>
</comment>
<reference key="1">
    <citation type="journal article" date="1987" name="J. Mol. Evol.">
        <title>Evolutionary conservation of the 3' ends of members of a family of giant secretory protein genes in Chironomus pallidivittatus.</title>
        <authorList>
            <person name="Saiga H."/>
            <person name="Grond C."/>
            <person name="Schmidt E.R."/>
            <person name="Edstroem J.-E."/>
        </authorList>
    </citation>
    <scope>NUCLEOTIDE SEQUENCE [GENOMIC DNA]</scope>
</reference>
<accession>P08724</accession>